<keyword id="KW-1185">Reference proteome</keyword>
<name>YVCD_VACCC</name>
<gene>
    <name type="ORF">C ORF D</name>
</gene>
<reference key="1">
    <citation type="journal article" date="1990" name="Virology">
        <title>The complete DNA sequence of vaccinia virus.</title>
        <authorList>
            <person name="Goebel S.J."/>
            <person name="Johnson G.P."/>
            <person name="Perkus M.E."/>
            <person name="Davis S.W."/>
            <person name="Winslow J.P."/>
            <person name="Paoletti E."/>
        </authorList>
    </citation>
    <scope>NUCLEOTIDE SEQUENCE [LARGE SCALE GENOMIC DNA]</scope>
</reference>
<reference key="2">
    <citation type="journal article" date="1990" name="Virology">
        <title>Appendix to 'The complete DNA sequence of vaccinia virus'.</title>
        <authorList>
            <person name="Goebel S.J."/>
            <person name="Johnson G.P."/>
            <person name="Perkus M.E."/>
            <person name="Davis S.W."/>
            <person name="Winslow J.P."/>
            <person name="Paoletti E."/>
        </authorList>
    </citation>
    <scope>COMPLETE GENOME</scope>
</reference>
<sequence>MLLHVGIPLSNNSLNTSTLGFDVVAYFSTILIPFLILFISIPFEISNFNKSISMLSEHRYSNISKSLIFL</sequence>
<proteinExistence type="predicted"/>
<accession>P21122</accession>
<organism>
    <name type="scientific">Vaccinia virus (strain Copenhagen)</name>
    <name type="common">VACV</name>
    <dbReference type="NCBI Taxonomy" id="10249"/>
    <lineage>
        <taxon>Viruses</taxon>
        <taxon>Varidnaviria</taxon>
        <taxon>Bamfordvirae</taxon>
        <taxon>Nucleocytoviricota</taxon>
        <taxon>Pokkesviricetes</taxon>
        <taxon>Chitovirales</taxon>
        <taxon>Poxviridae</taxon>
        <taxon>Chordopoxvirinae</taxon>
        <taxon>Orthopoxvirus</taxon>
        <taxon>Vaccinia virus</taxon>
    </lineage>
</organism>
<protein>
    <recommendedName>
        <fullName>Uncharacterized 7.9 kDa protein</fullName>
    </recommendedName>
</protein>
<feature type="chain" id="PRO_0000099682" description="Uncharacterized 7.9 kDa protein">
    <location>
        <begin position="1"/>
        <end position="70"/>
    </location>
</feature>
<dbReference type="EMBL" id="M35027">
    <property type="protein sequence ID" value="AAA47989.1"/>
    <property type="molecule type" value="Genomic_DNA"/>
</dbReference>
<dbReference type="PIR" id="E33172">
    <property type="entry name" value="E33172"/>
</dbReference>
<dbReference type="Proteomes" id="UP000008269">
    <property type="component" value="Segment"/>
</dbReference>
<organismHost>
    <name type="scientific">Homo sapiens</name>
    <name type="common">Human</name>
    <dbReference type="NCBI Taxonomy" id="9606"/>
</organismHost>